<comment type="function">
    <text evidence="2">Plays a role in left-right patterning process.</text>
</comment>
<comment type="tissue specificity">
    <text evidence="3">Expressed specifically by cells of the ciliated left-right organizer.</text>
</comment>
<comment type="disruption phenotype">
    <text evidence="2">ENU-induced null mutation in mice produce heterotaxy.</text>
</comment>
<comment type="caution">
    <text evidence="3">Undergoes pseudogenization. Present in fish, amphibians, and odd-toed mammals, including humans and rodents, but is absent or mutated in birds, reptiles, and cetartiodactyla.</text>
</comment>
<gene>
    <name type="primary">Ciroz</name>
    <name type="synonym">Gm572</name>
</gene>
<evidence type="ECO:0000255" key="1"/>
<evidence type="ECO:0000269" key="2">
    <source>
    </source>
</evidence>
<evidence type="ECO:0000269" key="3">
    <source>
    </source>
</evidence>
<dbReference type="EMBL" id="AL606969">
    <property type="status" value="NOT_ANNOTATED_CDS"/>
    <property type="molecule type" value="Genomic_DNA"/>
</dbReference>
<dbReference type="RefSeq" id="NP_001078974.1">
    <property type="nucleotide sequence ID" value="NM_001085505.1"/>
</dbReference>
<dbReference type="STRING" id="10090.ENSMUSP00000101323"/>
<dbReference type="jPOST" id="B1ARY8"/>
<dbReference type="PaxDb" id="10090-ENSMUSP00000101323"/>
<dbReference type="ProteomicsDB" id="367742"/>
<dbReference type="Antibodypedia" id="50924">
    <property type="antibodies" value="35 antibodies from 9 providers"/>
</dbReference>
<dbReference type="Ensembl" id="ENSMUST00000105698.3">
    <property type="protein sequence ID" value="ENSMUSP00000101323.3"/>
    <property type="gene ID" value="ENSMUSG00000070577.7"/>
</dbReference>
<dbReference type="GeneID" id="230909"/>
<dbReference type="KEGG" id="mmu:230909"/>
<dbReference type="UCSC" id="uc008vvj.1">
    <property type="organism name" value="mouse"/>
</dbReference>
<dbReference type="AGR" id="MGI:2685418"/>
<dbReference type="MGI" id="MGI:2685418">
    <property type="gene designation" value="Gm572"/>
</dbReference>
<dbReference type="VEuPathDB" id="HostDB:ENSMUSG00000070577"/>
<dbReference type="eggNOG" id="ENOG502S0MU">
    <property type="taxonomic scope" value="Eukaryota"/>
</dbReference>
<dbReference type="GeneTree" id="ENSGT00390000003592"/>
<dbReference type="HOGENOM" id="CLU_798207_0_0_1"/>
<dbReference type="InParanoid" id="B1ARY8"/>
<dbReference type="OMA" id="ETNHKMH"/>
<dbReference type="OrthoDB" id="8946479at2759"/>
<dbReference type="TreeFam" id="TF338179"/>
<dbReference type="BioGRID-ORCS" id="230909">
    <property type="hits" value="0 hits in 68 CRISPR screens"/>
</dbReference>
<dbReference type="ChiTaRS" id="Gm572">
    <property type="organism name" value="mouse"/>
</dbReference>
<dbReference type="Proteomes" id="UP000000589">
    <property type="component" value="Chromosome 4"/>
</dbReference>
<dbReference type="RNAct" id="B1ARY8">
    <property type="molecule type" value="protein"/>
</dbReference>
<dbReference type="Bgee" id="ENSMUSG00000070577">
    <property type="expression patterns" value="Expressed in islet of Langerhans and 21 other cell types or tissues"/>
</dbReference>
<dbReference type="GO" id="GO:0005576">
    <property type="term" value="C:extracellular region"/>
    <property type="evidence" value="ECO:0000250"/>
    <property type="project" value="UniProtKB"/>
</dbReference>
<dbReference type="GO" id="GO:0007368">
    <property type="term" value="P:determination of left/right symmetry"/>
    <property type="evidence" value="ECO:0000315"/>
    <property type="project" value="MGI"/>
</dbReference>
<dbReference type="GO" id="GO:0007507">
    <property type="term" value="P:heart development"/>
    <property type="evidence" value="ECO:0000315"/>
    <property type="project" value="MGI"/>
</dbReference>
<dbReference type="InterPro" id="IPR027956">
    <property type="entry name" value="C1orf127-like"/>
</dbReference>
<dbReference type="InterPro" id="IPR049521">
    <property type="entry name" value="DUF4556"/>
</dbReference>
<dbReference type="InterPro" id="IPR054554">
    <property type="entry name" value="ZP1/4_Ig-like"/>
</dbReference>
<dbReference type="PANTHER" id="PTHR38653">
    <property type="entry name" value="GENE 572-RELATED"/>
    <property type="match status" value="1"/>
</dbReference>
<dbReference type="PANTHER" id="PTHR38653:SF1">
    <property type="entry name" value="GENE 572-RELATED"/>
    <property type="match status" value="1"/>
</dbReference>
<dbReference type="Pfam" id="PF15094">
    <property type="entry name" value="DUF4556"/>
    <property type="match status" value="1"/>
</dbReference>
<dbReference type="Pfam" id="PF22821">
    <property type="entry name" value="ZP1_ZP4_Ig-like"/>
    <property type="match status" value="1"/>
</dbReference>
<feature type="signal peptide" evidence="1">
    <location>
        <begin position="1"/>
        <end position="18"/>
    </location>
</feature>
<feature type="chain" id="PRO_5002761464" description="Ciliated left-right organizer ZP-N domains-containing protein">
    <location>
        <begin position="19"/>
        <end position="786"/>
    </location>
</feature>
<proteinExistence type="evidence at transcript level"/>
<name>CIROZ_MOUSE</name>
<organism>
    <name type="scientific">Mus musculus</name>
    <name type="common">Mouse</name>
    <dbReference type="NCBI Taxonomy" id="10090"/>
    <lineage>
        <taxon>Eukaryota</taxon>
        <taxon>Metazoa</taxon>
        <taxon>Chordata</taxon>
        <taxon>Craniata</taxon>
        <taxon>Vertebrata</taxon>
        <taxon>Euteleostomi</taxon>
        <taxon>Mammalia</taxon>
        <taxon>Eutheria</taxon>
        <taxon>Euarchontoglires</taxon>
        <taxon>Glires</taxon>
        <taxon>Rodentia</taxon>
        <taxon>Myomorpha</taxon>
        <taxon>Muroidea</taxon>
        <taxon>Muridae</taxon>
        <taxon>Murinae</taxon>
        <taxon>Mus</taxon>
        <taxon>Mus</taxon>
    </lineage>
</organism>
<reference key="1">
    <citation type="journal article" date="2009" name="PLoS Biol.">
        <title>Lineage-specific biology revealed by a finished genome assembly of the mouse.</title>
        <authorList>
            <person name="Church D.M."/>
            <person name="Goodstadt L."/>
            <person name="Hillier L.W."/>
            <person name="Zody M.C."/>
            <person name="Goldstein S."/>
            <person name="She X."/>
            <person name="Bult C.J."/>
            <person name="Agarwala R."/>
            <person name="Cherry J.L."/>
            <person name="DiCuccio M."/>
            <person name="Hlavina W."/>
            <person name="Kapustin Y."/>
            <person name="Meric P."/>
            <person name="Maglott D."/>
            <person name="Birtle Z."/>
            <person name="Marques A.C."/>
            <person name="Graves T."/>
            <person name="Zhou S."/>
            <person name="Teague B."/>
            <person name="Potamousis K."/>
            <person name="Churas C."/>
            <person name="Place M."/>
            <person name="Herschleb J."/>
            <person name="Runnheim R."/>
            <person name="Forrest D."/>
            <person name="Amos-Landgraf J."/>
            <person name="Schwartz D.C."/>
            <person name="Cheng Z."/>
            <person name="Lindblad-Toh K."/>
            <person name="Eichler E.E."/>
            <person name="Ponting C.P."/>
        </authorList>
    </citation>
    <scope>NUCLEOTIDE SEQUENCE [LARGE SCALE GENOMIC DNA]</scope>
    <source>
        <strain>C57BL/6J</strain>
    </source>
</reference>
<reference key="2">
    <citation type="journal article" date="2015" name="Nature">
        <title>Global genetic analysis in mice unveils central role for cilia in congenital heart disease.</title>
        <authorList>
            <person name="Li Y."/>
            <person name="Klena N.T."/>
            <person name="Gabriel G.C."/>
            <person name="Liu X."/>
            <person name="Kim A.J."/>
            <person name="Lemke K."/>
            <person name="Chen Y."/>
            <person name="Chatterjee B."/>
            <person name="Devine W."/>
            <person name="Damerla R.R."/>
            <person name="Chang C."/>
            <person name="Yagi H."/>
            <person name="San Agustin J.T."/>
            <person name="Thahir M."/>
            <person name="Anderton S."/>
            <person name="Lawhead C."/>
            <person name="Vescovi A."/>
            <person name="Pratt H."/>
            <person name="Morgan J."/>
            <person name="Haynes L."/>
            <person name="Smith C.L."/>
            <person name="Eppig J.T."/>
            <person name="Reinholdt L."/>
            <person name="Francis R."/>
            <person name="Leatherbury L."/>
            <person name="Ganapathiraju M.K."/>
            <person name="Tobita K."/>
            <person name="Pazour G.J."/>
            <person name="Lo C.W."/>
        </authorList>
    </citation>
    <scope>DISRUPTION PHENOTYPE</scope>
    <scope>FUNCTION</scope>
</reference>
<reference key="3">
    <citation type="journal article" date="2024" name="Am. J. Hum. Genet.">
        <title>CIROZ is dispensable in ancestral vertebrates but essential for left-right patterning in humans.</title>
        <authorList>
            <person name="Szenker-Ravi E."/>
            <person name="Ott T."/>
            <person name="Yusof A."/>
            <person name="Chopra M."/>
            <person name="Khatoo M."/>
            <person name="Pak B."/>
            <person name="Xuan Goh W."/>
            <person name="Beckers A."/>
            <person name="Brady A.F."/>
            <person name="Ewans L.J."/>
            <person name="Djaziri N."/>
            <person name="Almontashiri N.A.M."/>
            <person name="Alghamdi M.A."/>
            <person name="Alharby E."/>
            <person name="Dasouki M."/>
            <person name="Romo L."/>
            <person name="Tan W.H."/>
            <person name="Maddirevula S."/>
            <person name="Alkuraya F.S."/>
            <person name="Giordano J.L."/>
            <person name="Alkelai A."/>
            <person name="Wapner R.J."/>
            <person name="Stals K."/>
            <person name="Alfadhel M."/>
            <person name="Alswaid A.F."/>
            <person name="Bogusch S."/>
            <person name="Schafer-Kosulya A."/>
            <person name="Vogel S."/>
            <person name="Vick P."/>
            <person name="Schweickert A."/>
            <person name="Wakeling M."/>
            <person name="Moreau de Bellaing A."/>
            <person name="Alshamsi A.M."/>
            <person name="Sanlaville D."/>
            <person name="Mbarek H."/>
            <person name="Saad C."/>
            <person name="Ellard S."/>
            <person name="Eisenhaber F."/>
            <person name="Tripolszki K."/>
            <person name="Beetz C."/>
            <person name="Bauer P."/>
            <person name="Gossler A."/>
            <person name="Eisenhaber B."/>
            <person name="Blum M."/>
            <person name="Bouvagnet P."/>
            <person name="Bertoli-Avella A."/>
            <person name="Amiel J."/>
            <person name="Gordon C.T."/>
            <person name="Reversade B."/>
        </authorList>
    </citation>
    <scope>TISSUE SPECIFICITY</scope>
    <scope>CAUTION</scope>
</reference>
<accession>B1ARY8</accession>
<protein>
    <recommendedName>
        <fullName>Ciliated left-right organizer ZP-N domains-containing protein</fullName>
    </recommendedName>
</protein>
<keyword id="KW-1185">Reference proteome</keyword>
<keyword id="KW-0732">Signal</keyword>
<sequence>MWGSVAVVWAICLACIQPAVFPWILPVRSNKDRPRPAHGALTEKVECFSDYMTLQIPSSHVQGLKQWLVGVLRLPGSKRAPNHLDSLLTKCGYLLHPAHEGGFIFRALYSGCFVQKEKANYRLEIRMFQKGAKRLKQSDRYIMRCPMMVARLGEQSVRCHPSFIQVSRPWPPRTDAGQTPWLLSLRGELVASLEDASLMGLEVDIGATMVTIQSPRQELLQRQEVWNTSLELLPLWLVSGSYAYSFEAACPLVSSQPGSEISVHIPKQRLGLVKRGSLVEESLSPRFLQVQQTDTFTVAEDRDFVIVSIPSMRLLQDQPCQKARESPGTQAFYRVDLSLDFAEMDSPVHWTVENFFQCVGSREDSLFSTVTPRTTLPTQSPGWETTPAETPPAASPPLQTPQMAVLEEPPQHFVHQSAKESTKQELAAAFMQITRPARGSWVSMASPSSSAMQEHQGPQTPPEKADLSPHPQTPATLSSEHTEVSQAGPGPSHYVSLAPNSLSTHLSSEITSSLWPSWPSDGPPMLLSSEPSVKLTEVPRATRAGQDSIQPSRSPFPPGELSRETVNSTESTEPIPREPAYIREEFPPFTKSFMSSLAEEGLIFHPDPKRPQERPIVKAEKPLQNDHGPSGEETRHYLDLSTSEPSQEMKELGVDATFTTSRRRQPDARAYLGTSRPELTGRPRVGTAALQTTLHKGLLASTSERPAAPSEGALQLESAPSWPEGWHDLGAAHTASPLSSHTHSPLVPTQAMFPGSDEPGNSLPGSQGSVESRLLPTTDSHQSPEL</sequence>